<accession>Q46IR4</accession>
<name>RL22_PROMT</name>
<keyword id="KW-1185">Reference proteome</keyword>
<keyword id="KW-0687">Ribonucleoprotein</keyword>
<keyword id="KW-0689">Ribosomal protein</keyword>
<keyword id="KW-0694">RNA-binding</keyword>
<keyword id="KW-0699">rRNA-binding</keyword>
<reference key="1">
    <citation type="journal article" date="2007" name="PLoS Genet.">
        <title>Patterns and implications of gene gain and loss in the evolution of Prochlorococcus.</title>
        <authorList>
            <person name="Kettler G.C."/>
            <person name="Martiny A.C."/>
            <person name="Huang K."/>
            <person name="Zucker J."/>
            <person name="Coleman M.L."/>
            <person name="Rodrigue S."/>
            <person name="Chen F."/>
            <person name="Lapidus A."/>
            <person name="Ferriera S."/>
            <person name="Johnson J."/>
            <person name="Steglich C."/>
            <person name="Church G.M."/>
            <person name="Richardson P."/>
            <person name="Chisholm S.W."/>
        </authorList>
    </citation>
    <scope>NUCLEOTIDE SEQUENCE [LARGE SCALE GENOMIC DNA]</scope>
    <source>
        <strain>NATL2A</strain>
    </source>
</reference>
<protein>
    <recommendedName>
        <fullName evidence="1">Large ribosomal subunit protein uL22</fullName>
    </recommendedName>
    <alternativeName>
        <fullName evidence="2">50S ribosomal protein L22</fullName>
    </alternativeName>
</protein>
<feature type="chain" id="PRO_0000243182" description="Large ribosomal subunit protein uL22">
    <location>
        <begin position="1"/>
        <end position="126"/>
    </location>
</feature>
<proteinExistence type="inferred from homology"/>
<sequence>MTTSSTKTTAQAHGRYIRGSASKVRRVLDQIRGRTYRDALIMLEFMPYRSTEPITKVLRSAVANAENNLGLDPSSLMISTATADMGPPMKRYRPRAQGRAFAIKKQTCHISISVSATQSTNSEDSD</sequence>
<evidence type="ECO:0000255" key="1">
    <source>
        <dbReference type="HAMAP-Rule" id="MF_01331"/>
    </source>
</evidence>
<evidence type="ECO:0000305" key="2"/>
<dbReference type="EMBL" id="CP000095">
    <property type="protein sequence ID" value="AAZ58614.1"/>
    <property type="molecule type" value="Genomic_DNA"/>
</dbReference>
<dbReference type="RefSeq" id="WP_011295468.1">
    <property type="nucleotide sequence ID" value="NC_007335.2"/>
</dbReference>
<dbReference type="SMR" id="Q46IR4"/>
<dbReference type="STRING" id="59920.PMN2A_1124"/>
<dbReference type="KEGG" id="pmn:PMN2A_1124"/>
<dbReference type="HOGENOM" id="CLU_083987_3_3_3"/>
<dbReference type="OrthoDB" id="9805969at2"/>
<dbReference type="PhylomeDB" id="Q46IR4"/>
<dbReference type="Proteomes" id="UP000002535">
    <property type="component" value="Chromosome"/>
</dbReference>
<dbReference type="GO" id="GO:0022625">
    <property type="term" value="C:cytosolic large ribosomal subunit"/>
    <property type="evidence" value="ECO:0007669"/>
    <property type="project" value="TreeGrafter"/>
</dbReference>
<dbReference type="GO" id="GO:0019843">
    <property type="term" value="F:rRNA binding"/>
    <property type="evidence" value="ECO:0007669"/>
    <property type="project" value="UniProtKB-UniRule"/>
</dbReference>
<dbReference type="GO" id="GO:0003735">
    <property type="term" value="F:structural constituent of ribosome"/>
    <property type="evidence" value="ECO:0007669"/>
    <property type="project" value="InterPro"/>
</dbReference>
<dbReference type="GO" id="GO:0006412">
    <property type="term" value="P:translation"/>
    <property type="evidence" value="ECO:0007669"/>
    <property type="project" value="UniProtKB-UniRule"/>
</dbReference>
<dbReference type="CDD" id="cd00336">
    <property type="entry name" value="Ribosomal_L22"/>
    <property type="match status" value="1"/>
</dbReference>
<dbReference type="Gene3D" id="3.90.470.10">
    <property type="entry name" value="Ribosomal protein L22/L17"/>
    <property type="match status" value="1"/>
</dbReference>
<dbReference type="HAMAP" id="MF_01331_B">
    <property type="entry name" value="Ribosomal_uL22_B"/>
    <property type="match status" value="1"/>
</dbReference>
<dbReference type="InterPro" id="IPR001063">
    <property type="entry name" value="Ribosomal_uL22"/>
</dbReference>
<dbReference type="InterPro" id="IPR005727">
    <property type="entry name" value="Ribosomal_uL22_bac/chlpt-type"/>
</dbReference>
<dbReference type="InterPro" id="IPR047867">
    <property type="entry name" value="Ribosomal_uL22_bac/org-type"/>
</dbReference>
<dbReference type="InterPro" id="IPR018260">
    <property type="entry name" value="Ribosomal_uL22_CS"/>
</dbReference>
<dbReference type="InterPro" id="IPR036394">
    <property type="entry name" value="Ribosomal_uL22_sf"/>
</dbReference>
<dbReference type="NCBIfam" id="TIGR01044">
    <property type="entry name" value="rplV_bact"/>
    <property type="match status" value="1"/>
</dbReference>
<dbReference type="PANTHER" id="PTHR13501">
    <property type="entry name" value="CHLOROPLAST 50S RIBOSOMAL PROTEIN L22-RELATED"/>
    <property type="match status" value="1"/>
</dbReference>
<dbReference type="PANTHER" id="PTHR13501:SF8">
    <property type="entry name" value="LARGE RIBOSOMAL SUBUNIT PROTEIN UL22M"/>
    <property type="match status" value="1"/>
</dbReference>
<dbReference type="Pfam" id="PF00237">
    <property type="entry name" value="Ribosomal_L22"/>
    <property type="match status" value="1"/>
</dbReference>
<dbReference type="SUPFAM" id="SSF54843">
    <property type="entry name" value="Ribosomal protein L22"/>
    <property type="match status" value="1"/>
</dbReference>
<dbReference type="PROSITE" id="PS00464">
    <property type="entry name" value="RIBOSOMAL_L22"/>
    <property type="match status" value="1"/>
</dbReference>
<gene>
    <name evidence="1" type="primary">rplV</name>
    <name evidence="1" type="synonym">rpl22</name>
    <name type="ordered locus">PMN2A_1124</name>
</gene>
<organism>
    <name type="scientific">Prochlorococcus marinus (strain NATL2A)</name>
    <dbReference type="NCBI Taxonomy" id="59920"/>
    <lineage>
        <taxon>Bacteria</taxon>
        <taxon>Bacillati</taxon>
        <taxon>Cyanobacteriota</taxon>
        <taxon>Cyanophyceae</taxon>
        <taxon>Synechococcales</taxon>
        <taxon>Prochlorococcaceae</taxon>
        <taxon>Prochlorococcus</taxon>
    </lineage>
</organism>
<comment type="function">
    <text evidence="1">This protein binds specifically to 23S rRNA; its binding is stimulated by other ribosomal proteins, e.g. L4, L17, and L20. It is important during the early stages of 50S assembly. It makes multiple contacts with different domains of the 23S rRNA in the assembled 50S subunit and ribosome (By similarity).</text>
</comment>
<comment type="function">
    <text evidence="1">The globular domain of the protein is located near the polypeptide exit tunnel on the outside of the subunit, while an extended beta-hairpin is found that lines the wall of the exit tunnel in the center of the 70S ribosome.</text>
</comment>
<comment type="subunit">
    <text evidence="1">Part of the 50S ribosomal subunit.</text>
</comment>
<comment type="similarity">
    <text evidence="1">Belongs to the universal ribosomal protein uL22 family.</text>
</comment>